<name>YZZE_STRCO</name>
<evidence type="ECO:0000305" key="1"/>
<proteinExistence type="inferred from homology"/>
<keyword id="KW-1185">Reference proteome</keyword>
<comment type="similarity">
    <text evidence="1">Belongs to the UPF0157 (GrpB) family.</text>
</comment>
<protein>
    <recommendedName>
        <fullName>UPF0157 protein SCO7215</fullName>
    </recommendedName>
</protein>
<dbReference type="EMBL" id="AL939130">
    <property type="protein sequence ID" value="CAB94638.1"/>
    <property type="molecule type" value="Genomic_DNA"/>
</dbReference>
<dbReference type="RefSeq" id="NP_631271.1">
    <property type="nucleotide sequence ID" value="NC_003888.3"/>
</dbReference>
<dbReference type="RefSeq" id="WP_011031516.1">
    <property type="nucleotide sequence ID" value="NZ_VNID01000019.1"/>
</dbReference>
<dbReference type="SMR" id="Q9K470"/>
<dbReference type="STRING" id="100226.gene:17764875"/>
<dbReference type="PaxDb" id="100226-SCO7215"/>
<dbReference type="KEGG" id="sco:SCO7215"/>
<dbReference type="PATRIC" id="fig|100226.15.peg.7314"/>
<dbReference type="eggNOG" id="COG2320">
    <property type="taxonomic scope" value="Bacteria"/>
</dbReference>
<dbReference type="HOGENOM" id="CLU_086407_1_1_11"/>
<dbReference type="InParanoid" id="Q9K470"/>
<dbReference type="OrthoDB" id="9799092at2"/>
<dbReference type="PhylomeDB" id="Q9K470"/>
<dbReference type="Proteomes" id="UP000001973">
    <property type="component" value="Chromosome"/>
</dbReference>
<dbReference type="Gene3D" id="3.30.460.10">
    <property type="entry name" value="Beta Polymerase, domain 2"/>
    <property type="match status" value="1"/>
</dbReference>
<dbReference type="InterPro" id="IPR007344">
    <property type="entry name" value="GrpB/CoaE"/>
</dbReference>
<dbReference type="InterPro" id="IPR043519">
    <property type="entry name" value="NT_sf"/>
</dbReference>
<dbReference type="PANTHER" id="PTHR34822">
    <property type="entry name" value="GRPB DOMAIN PROTEIN (AFU_ORTHOLOGUE AFUA_1G01530)"/>
    <property type="match status" value="1"/>
</dbReference>
<dbReference type="PANTHER" id="PTHR34822:SF1">
    <property type="entry name" value="GRPB FAMILY PROTEIN"/>
    <property type="match status" value="1"/>
</dbReference>
<dbReference type="Pfam" id="PF04229">
    <property type="entry name" value="GrpB"/>
    <property type="match status" value="1"/>
</dbReference>
<dbReference type="SUPFAM" id="SSF81301">
    <property type="entry name" value="Nucleotidyltransferase"/>
    <property type="match status" value="1"/>
</dbReference>
<accession>Q9K470</accession>
<reference key="1">
    <citation type="journal article" date="2002" name="Nature">
        <title>Complete genome sequence of the model actinomycete Streptomyces coelicolor A3(2).</title>
        <authorList>
            <person name="Bentley S.D."/>
            <person name="Chater K.F."/>
            <person name="Cerdeno-Tarraga A.-M."/>
            <person name="Challis G.L."/>
            <person name="Thomson N.R."/>
            <person name="James K.D."/>
            <person name="Harris D.E."/>
            <person name="Quail M.A."/>
            <person name="Kieser H."/>
            <person name="Harper D."/>
            <person name="Bateman A."/>
            <person name="Brown S."/>
            <person name="Chandra G."/>
            <person name="Chen C.W."/>
            <person name="Collins M."/>
            <person name="Cronin A."/>
            <person name="Fraser A."/>
            <person name="Goble A."/>
            <person name="Hidalgo J."/>
            <person name="Hornsby T."/>
            <person name="Howarth S."/>
            <person name="Huang C.-H."/>
            <person name="Kieser T."/>
            <person name="Larke L."/>
            <person name="Murphy L.D."/>
            <person name="Oliver K."/>
            <person name="O'Neil S."/>
            <person name="Rabbinowitsch E."/>
            <person name="Rajandream M.A."/>
            <person name="Rutherford K.M."/>
            <person name="Rutter S."/>
            <person name="Seeger K."/>
            <person name="Saunders D."/>
            <person name="Sharp S."/>
            <person name="Squares R."/>
            <person name="Squares S."/>
            <person name="Taylor K."/>
            <person name="Warren T."/>
            <person name="Wietzorrek A."/>
            <person name="Woodward J.R."/>
            <person name="Barrell B.G."/>
            <person name="Parkhill J."/>
            <person name="Hopwood D.A."/>
        </authorList>
    </citation>
    <scope>NUCLEOTIDE SEQUENCE [LARGE SCALE GENOMIC DNA]</scope>
    <source>
        <strain>ATCC BAA-471 / A3(2) / M145</strain>
    </source>
</reference>
<gene>
    <name type="ordered locus">SCO7215</name>
    <name type="ORF">SC2H12.14c</name>
</gene>
<organism>
    <name type="scientific">Streptomyces coelicolor (strain ATCC BAA-471 / A3(2) / M145)</name>
    <dbReference type="NCBI Taxonomy" id="100226"/>
    <lineage>
        <taxon>Bacteria</taxon>
        <taxon>Bacillati</taxon>
        <taxon>Actinomycetota</taxon>
        <taxon>Actinomycetes</taxon>
        <taxon>Kitasatosporales</taxon>
        <taxon>Streptomycetaceae</taxon>
        <taxon>Streptomyces</taxon>
        <taxon>Streptomyces albidoflavus group</taxon>
    </lineage>
</organism>
<feature type="chain" id="PRO_0000216130" description="UPF0157 protein SCO7215">
    <location>
        <begin position="1"/>
        <end position="186"/>
    </location>
</feature>
<sequence length="186" mass="20757">MTNSSGRRRPDVTTVEIIGGPEALEIGLSDYDARWAETYLRHRRRILDALGADVDVEHIGSTSVPGLAAKPIVDIVVAVADITSEEDYLDALLAAGYELRVREPGHRLVRTPGRDVHVHVYERGAAAVHEYLLFRDHLRADADDRALYENVKRALFEQPWNDMNDYSDAKSDVILAIKSRAGAARR</sequence>